<sequence>MIFVDTSFWAALGNAGDARHGTAKRLWASKPPVVMTSNHVLGETWTLLNRRCGHRAAVAAAAIRLSTVVRVEHVTADLEEQAWEWLVRHDEREYSFVDATSFAVMRKKGIQNAYAFDGDFSAAGFVEVRPE</sequence>
<accession>P0DMV7</accession>
<gene>
    <name type="primary">vapC20</name>
    <name type="ordered locus">MT2626.1</name>
</gene>
<organism>
    <name type="scientific">Mycobacterium tuberculosis (strain CDC 1551 / Oshkosh)</name>
    <dbReference type="NCBI Taxonomy" id="83331"/>
    <lineage>
        <taxon>Bacteria</taxon>
        <taxon>Bacillati</taxon>
        <taxon>Actinomycetota</taxon>
        <taxon>Actinomycetes</taxon>
        <taxon>Mycobacteriales</taxon>
        <taxon>Mycobacteriaceae</taxon>
        <taxon>Mycobacterium</taxon>
        <taxon>Mycobacterium tuberculosis complex</taxon>
    </lineage>
</organism>
<name>VPC20_MYCTO</name>
<evidence type="ECO:0000250" key="1">
    <source>
        <dbReference type="UniProtKB" id="P95004"/>
    </source>
</evidence>
<evidence type="ECO:0000255" key="2">
    <source>
        <dbReference type="HAMAP-Rule" id="MF_00265"/>
    </source>
</evidence>
<evidence type="ECO:0000305" key="3"/>
<feature type="chain" id="PRO_0000433055" description="23S rRNA-specific endonuclease VapC20">
    <location>
        <begin position="1"/>
        <end position="131"/>
    </location>
</feature>
<feature type="domain" description="PINc" evidence="2">
    <location>
        <begin position="2"/>
        <end position="125"/>
    </location>
</feature>
<feature type="binding site" evidence="2">
    <location>
        <position position="5"/>
    </location>
    <ligand>
        <name>Mg(2+)</name>
        <dbReference type="ChEBI" id="CHEBI:18420"/>
    </ligand>
</feature>
<feature type="binding site" evidence="2">
    <location>
        <position position="98"/>
    </location>
    <ligand>
        <name>Mg(2+)</name>
        <dbReference type="ChEBI" id="CHEBI:18420"/>
    </ligand>
</feature>
<comment type="function">
    <text evidence="1 2">Toxic component of a type II toxin-antitoxin (TA) system. An endoribonuclease that cleaves 23S rRNA in the sarcin-ricin loop (SRL). The SRL sequence is highly conserved and is implicated in GTP hydrolysis by EF-Tu and EF-G. Acts on purified ribosomes but not on isolated RNA. Its toxic effect is neutralized by coexpression with cognate antitoxin VapB20.</text>
</comment>
<comment type="cofactor">
    <cofactor evidence="2">
        <name>Mg(2+)</name>
        <dbReference type="ChEBI" id="CHEBI:18420"/>
    </cofactor>
</comment>
<comment type="similarity">
    <text evidence="2">Belongs to the PINc/VapC protein family.</text>
</comment>
<keyword id="KW-0255">Endonuclease</keyword>
<keyword id="KW-0378">Hydrolase</keyword>
<keyword id="KW-0460">Magnesium</keyword>
<keyword id="KW-0479">Metal-binding</keyword>
<keyword id="KW-0540">Nuclease</keyword>
<keyword id="KW-1185">Reference proteome</keyword>
<keyword id="KW-1277">Toxin-antitoxin system</keyword>
<dbReference type="EC" id="3.1.-.-" evidence="2"/>
<dbReference type="EMBL" id="AE000516">
    <property type="status" value="NOT_ANNOTATED_CDS"/>
    <property type="molecule type" value="Genomic_DNA"/>
</dbReference>
<dbReference type="RefSeq" id="WP_003413180.1">
    <property type="nucleotide sequence ID" value="NZ_KK341227.1"/>
</dbReference>
<dbReference type="SMR" id="P0DMV7"/>
<dbReference type="PATRIC" id="fig|83331.31.peg.2832"/>
<dbReference type="Proteomes" id="UP000001020">
    <property type="component" value="Chromosome"/>
</dbReference>
<dbReference type="GO" id="GO:0000287">
    <property type="term" value="F:magnesium ion binding"/>
    <property type="evidence" value="ECO:0007669"/>
    <property type="project" value="UniProtKB-UniRule"/>
</dbReference>
<dbReference type="GO" id="GO:0004521">
    <property type="term" value="F:RNA endonuclease activity"/>
    <property type="evidence" value="ECO:0007669"/>
    <property type="project" value="InterPro"/>
</dbReference>
<dbReference type="GO" id="GO:0016075">
    <property type="term" value="P:rRNA catabolic process"/>
    <property type="evidence" value="ECO:0007669"/>
    <property type="project" value="TreeGrafter"/>
</dbReference>
<dbReference type="CDD" id="cd18680">
    <property type="entry name" value="PIN_MtVapC20-like"/>
    <property type="match status" value="1"/>
</dbReference>
<dbReference type="FunFam" id="3.40.50.1010:FF:000042">
    <property type="entry name" value="Ribonuclease VapC"/>
    <property type="match status" value="1"/>
</dbReference>
<dbReference type="Gene3D" id="3.40.50.1010">
    <property type="entry name" value="5'-nuclease"/>
    <property type="match status" value="1"/>
</dbReference>
<dbReference type="HAMAP" id="MF_00265">
    <property type="entry name" value="VapC_Nob1"/>
    <property type="match status" value="1"/>
</dbReference>
<dbReference type="InterPro" id="IPR029060">
    <property type="entry name" value="PIN-like_dom_sf"/>
</dbReference>
<dbReference type="InterPro" id="IPR002716">
    <property type="entry name" value="PIN_dom"/>
</dbReference>
<dbReference type="InterPro" id="IPR039018">
    <property type="entry name" value="VapC20-like"/>
</dbReference>
<dbReference type="InterPro" id="IPR022907">
    <property type="entry name" value="VapC_family"/>
</dbReference>
<dbReference type="PANTHER" id="PTHR42188">
    <property type="entry name" value="23S RRNA-SPECIFIC ENDONUCLEASE VAPC20"/>
    <property type="match status" value="1"/>
</dbReference>
<dbReference type="PANTHER" id="PTHR42188:SF1">
    <property type="entry name" value="23S RRNA-SPECIFIC ENDONUCLEASE VAPC20"/>
    <property type="match status" value="1"/>
</dbReference>
<dbReference type="Pfam" id="PF01850">
    <property type="entry name" value="PIN"/>
    <property type="match status" value="1"/>
</dbReference>
<dbReference type="SUPFAM" id="SSF88723">
    <property type="entry name" value="PIN domain-like"/>
    <property type="match status" value="1"/>
</dbReference>
<reference key="1">
    <citation type="journal article" date="2002" name="J. Bacteriol.">
        <title>Whole-genome comparison of Mycobacterium tuberculosis clinical and laboratory strains.</title>
        <authorList>
            <person name="Fleischmann R.D."/>
            <person name="Alland D."/>
            <person name="Eisen J.A."/>
            <person name="Carpenter L."/>
            <person name="White O."/>
            <person name="Peterson J.D."/>
            <person name="DeBoy R.T."/>
            <person name="Dodson R.J."/>
            <person name="Gwinn M.L."/>
            <person name="Haft D.H."/>
            <person name="Hickey E.K."/>
            <person name="Kolonay J.F."/>
            <person name="Nelson W.C."/>
            <person name="Umayam L.A."/>
            <person name="Ermolaeva M.D."/>
            <person name="Salzberg S.L."/>
            <person name="Delcher A."/>
            <person name="Utterback T.R."/>
            <person name="Weidman J.F."/>
            <person name="Khouri H.M."/>
            <person name="Gill J."/>
            <person name="Mikula A."/>
            <person name="Bishai W."/>
            <person name="Jacobs W.R. Jr."/>
            <person name="Venter J.C."/>
            <person name="Fraser C.M."/>
        </authorList>
    </citation>
    <scope>NUCLEOTIDE SEQUENCE [LARGE SCALE GENOMIC DNA]</scope>
    <source>
        <strain>CDC 1551 / Oshkosh</strain>
    </source>
</reference>
<protein>
    <recommendedName>
        <fullName evidence="3">23S rRNA-specific endonuclease VapC20</fullName>
        <ecNumber evidence="2">3.1.-.-</ecNumber>
    </recommendedName>
    <alternativeName>
        <fullName evidence="2">Ribonuclease VapC20</fullName>
        <shortName evidence="2">RNase VapC20</shortName>
    </alternativeName>
    <alternativeName>
        <fullName evidence="2">Toxin VapC20</fullName>
    </alternativeName>
</protein>
<proteinExistence type="inferred from homology"/>